<name>PK23_MEIRD</name>
<gene>
    <name type="ORF">K649_10090</name>
</gene>
<accession>M9XB82</accession>
<feature type="chain" id="PRO_0000442599" description="AMP/ADP-polyphosphate phosphotransferase">
    <location>
        <begin position="1"/>
        <end position="267"/>
    </location>
</feature>
<feature type="mutagenesis site" description="6-fold decrease in synthesis of ATP from AMP." evidence="1">
    <original>E</original>
    <variation>G</variation>
    <location>
        <position position="126"/>
    </location>
</feature>
<feature type="mutagenesis site" description="20-fold decrease in synthesis of ATP from AMP. 7-fold decrease in synthesis of ATP from ADP." evidence="1">
    <original>E</original>
    <variation>N</variation>
    <location>
        <position position="126"/>
    </location>
</feature>
<feature type="helix" evidence="4">
    <location>
        <begin position="2"/>
        <end position="4"/>
    </location>
</feature>
<feature type="strand" evidence="3">
    <location>
        <begin position="8"/>
        <end position="10"/>
    </location>
</feature>
<feature type="helix" evidence="4">
    <location>
        <begin position="14"/>
        <end position="16"/>
    </location>
</feature>
<feature type="strand" evidence="4">
    <location>
        <begin position="25"/>
        <end position="27"/>
    </location>
</feature>
<feature type="helix" evidence="4">
    <location>
        <begin position="29"/>
        <end position="53"/>
    </location>
</feature>
<feature type="strand" evidence="4">
    <location>
        <begin position="57"/>
        <end position="65"/>
    </location>
</feature>
<feature type="helix" evidence="4">
    <location>
        <begin position="70"/>
        <end position="77"/>
    </location>
</feature>
<feature type="turn" evidence="4">
    <location>
        <begin position="78"/>
        <end position="80"/>
    </location>
</feature>
<feature type="helix" evidence="4">
    <location>
        <begin position="83"/>
        <end position="85"/>
    </location>
</feature>
<feature type="strand" evidence="4">
    <location>
        <begin position="86"/>
        <end position="90"/>
    </location>
</feature>
<feature type="helix" evidence="4">
    <location>
        <begin position="96"/>
        <end position="99"/>
    </location>
</feature>
<feature type="helix" evidence="4">
    <location>
        <begin position="105"/>
        <end position="108"/>
    </location>
</feature>
<feature type="strand" evidence="4">
    <location>
        <begin position="117"/>
        <end position="122"/>
    </location>
</feature>
<feature type="helix" evidence="4">
    <location>
        <begin position="124"/>
        <end position="128"/>
    </location>
</feature>
<feature type="helix" evidence="4">
    <location>
        <begin position="130"/>
        <end position="133"/>
    </location>
</feature>
<feature type="helix" evidence="4">
    <location>
        <begin position="139"/>
        <end position="142"/>
    </location>
</feature>
<feature type="helix" evidence="4">
    <location>
        <begin position="145"/>
        <end position="158"/>
    </location>
</feature>
<feature type="strand" evidence="4">
    <location>
        <begin position="161"/>
        <end position="169"/>
    </location>
</feature>
<feature type="helix" evidence="4">
    <location>
        <begin position="172"/>
        <end position="183"/>
    </location>
</feature>
<feature type="turn" evidence="4">
    <location>
        <begin position="186"/>
        <end position="188"/>
    </location>
</feature>
<feature type="helix" evidence="4">
    <location>
        <begin position="189"/>
        <end position="191"/>
    </location>
</feature>
<feature type="helix" evidence="4">
    <location>
        <begin position="195"/>
        <end position="201"/>
    </location>
</feature>
<feature type="helix" evidence="4">
    <location>
        <begin position="203"/>
        <end position="217"/>
    </location>
</feature>
<feature type="strand" evidence="4">
    <location>
        <begin position="220"/>
        <end position="222"/>
    </location>
</feature>
<feature type="strand" evidence="4">
    <location>
        <begin position="224"/>
        <end position="228"/>
    </location>
</feature>
<feature type="helix" evidence="4">
    <location>
        <begin position="232"/>
        <end position="249"/>
    </location>
</feature>
<sequence>MKKYRVQPDGRFELKRFDPDDTSAFEGGKQAALEALAVLNRRLEKLQELLYAEGQHKVLVVLQAMDAGGKDGTIRVVFDGVNPSGVRVASFGVPTEQELARDYLWRVHQQVPRKGELVIFNRSHYEDVLVVRVKNLVPQQVWQKRYRHIREFERMLADEGTTILKFFLHISKDEQRQRLQERLDNPEKRWKFRMGDLEDRRLWDRYQEAYEAAIRETSTEYAPWYVIPANKNWYRNWLVSHILVETLEGLAMQYPQPETASEKIVIE</sequence>
<keyword id="KW-0002">3D-structure</keyword>
<keyword id="KW-0903">Direct protein sequencing</keyword>
<keyword id="KW-0418">Kinase</keyword>
<keyword id="KW-0464">Manganese</keyword>
<keyword id="KW-0808">Transferase</keyword>
<dbReference type="EC" id="2.7.4.-" evidence="1"/>
<dbReference type="EMBL" id="CP005385">
    <property type="protein sequence ID" value="AGK05310.1"/>
    <property type="molecule type" value="Genomic_DNA"/>
</dbReference>
<dbReference type="RefSeq" id="WP_015586734.1">
    <property type="nucleotide sequence ID" value="NC_021081.1"/>
</dbReference>
<dbReference type="PDB" id="5MAQ">
    <property type="method" value="X-ray"/>
    <property type="resolution" value="2.46 A"/>
    <property type="chains" value="A/B/C/D=1-267"/>
</dbReference>
<dbReference type="PDB" id="5O6K">
    <property type="method" value="X-ray"/>
    <property type="resolution" value="2.90 A"/>
    <property type="chains" value="A/B/C/D=1-267"/>
</dbReference>
<dbReference type="PDB" id="5O6M">
    <property type="method" value="X-ray"/>
    <property type="resolution" value="2.30 A"/>
    <property type="chains" value="A/B/C/D=1-267"/>
</dbReference>
<dbReference type="PDBsum" id="5MAQ"/>
<dbReference type="PDBsum" id="5O6K"/>
<dbReference type="PDBsum" id="5O6M"/>
<dbReference type="SMR" id="M9XB82"/>
<dbReference type="STRING" id="504728.K649_10090"/>
<dbReference type="KEGG" id="mre:K649_10090"/>
<dbReference type="PATRIC" id="fig|504728.9.peg.2081"/>
<dbReference type="eggNOG" id="COG2326">
    <property type="taxonomic scope" value="Bacteria"/>
</dbReference>
<dbReference type="BRENDA" id="2.7.4.1">
    <property type="organism ID" value="6338"/>
</dbReference>
<dbReference type="BRENDA" id="2.7.4.34">
    <property type="organism ID" value="6338"/>
</dbReference>
<dbReference type="Proteomes" id="UP000013026">
    <property type="component" value="Chromosome"/>
</dbReference>
<dbReference type="GO" id="GO:0008976">
    <property type="term" value="F:polyphosphate kinase activity"/>
    <property type="evidence" value="ECO:0007669"/>
    <property type="project" value="UniProtKB-EC"/>
</dbReference>
<dbReference type="GO" id="GO:0006797">
    <property type="term" value="P:polyphosphate metabolic process"/>
    <property type="evidence" value="ECO:0007669"/>
    <property type="project" value="InterPro"/>
</dbReference>
<dbReference type="Gene3D" id="3.40.50.300">
    <property type="entry name" value="P-loop containing nucleotide triphosphate hydrolases"/>
    <property type="match status" value="1"/>
</dbReference>
<dbReference type="InterPro" id="IPR027417">
    <property type="entry name" value="P-loop_NTPase"/>
</dbReference>
<dbReference type="InterPro" id="IPR016898">
    <property type="entry name" value="Polyphosphate_phosphotransfera"/>
</dbReference>
<dbReference type="InterPro" id="IPR022300">
    <property type="entry name" value="PPK2-rel_1"/>
</dbReference>
<dbReference type="InterPro" id="IPR022488">
    <property type="entry name" value="PPK2-related"/>
</dbReference>
<dbReference type="NCBIfam" id="TIGR03709">
    <property type="entry name" value="PPK2_rel_1"/>
    <property type="match status" value="1"/>
</dbReference>
<dbReference type="PANTHER" id="PTHR34383:SF3">
    <property type="entry name" value="POLYPHOSPHATE:AMP PHOSPHOTRANSFERASE"/>
    <property type="match status" value="1"/>
</dbReference>
<dbReference type="PANTHER" id="PTHR34383">
    <property type="entry name" value="POLYPHOSPHATE:AMP PHOSPHOTRANSFERASE-RELATED"/>
    <property type="match status" value="1"/>
</dbReference>
<dbReference type="Pfam" id="PF03976">
    <property type="entry name" value="PPK2"/>
    <property type="match status" value="1"/>
</dbReference>
<dbReference type="PIRSF" id="PIRSF028756">
    <property type="entry name" value="PPK2_prd"/>
    <property type="match status" value="1"/>
</dbReference>
<dbReference type="SUPFAM" id="SSF52540">
    <property type="entry name" value="P-loop containing nucleoside triphosphate hydrolases"/>
    <property type="match status" value="1"/>
</dbReference>
<comment type="function">
    <text evidence="1">Uses inorganic polyphosphate (polyP) as a donor to convert both AMP to ADP and ADP to ATP. Can also use GMP, CMP, UMP, GDP, CDP and UDP.</text>
</comment>
<comment type="catalytic activity">
    <reaction evidence="1">
        <text>[phosphate](n) + ADP = [phosphate](n+1) + AMP</text>
        <dbReference type="Rhea" id="RHEA:57820"/>
        <dbReference type="Rhea" id="RHEA-COMP:9859"/>
        <dbReference type="Rhea" id="RHEA-COMP:14280"/>
        <dbReference type="ChEBI" id="CHEBI:16838"/>
        <dbReference type="ChEBI" id="CHEBI:456215"/>
        <dbReference type="ChEBI" id="CHEBI:456216"/>
    </reaction>
    <physiologicalReaction direction="right-to-left" evidence="1">
        <dbReference type="Rhea" id="RHEA:57822"/>
    </physiologicalReaction>
</comment>
<comment type="catalytic activity">
    <reaction evidence="1">
        <text>[phosphate](n) + ATP = [phosphate](n+1) + ADP</text>
        <dbReference type="Rhea" id="RHEA:19573"/>
        <dbReference type="Rhea" id="RHEA-COMP:9859"/>
        <dbReference type="Rhea" id="RHEA-COMP:14280"/>
        <dbReference type="ChEBI" id="CHEBI:16838"/>
        <dbReference type="ChEBI" id="CHEBI:30616"/>
        <dbReference type="ChEBI" id="CHEBI:456216"/>
    </reaction>
    <physiologicalReaction direction="right-to-left" evidence="1">
        <dbReference type="Rhea" id="RHEA:19575"/>
    </physiologicalReaction>
</comment>
<comment type="cofactor">
    <cofactor evidence="1">
        <name>Mn(2+)</name>
        <dbReference type="ChEBI" id="CHEBI:29035"/>
    </cofactor>
</comment>
<comment type="biophysicochemical properties">
    <temperatureDependence>
        <text evidence="1">Optimum temperature is 60-70 degrees Celsius.</text>
    </temperatureDependence>
</comment>
<comment type="similarity">
    <text evidence="2">Belongs to the polyphosphate kinase 2 (PPK2) family. Class III subfamily.</text>
</comment>
<evidence type="ECO:0000269" key="1">
    <source>
    </source>
</evidence>
<evidence type="ECO:0000305" key="2"/>
<evidence type="ECO:0007829" key="3">
    <source>
        <dbReference type="PDB" id="5O6K"/>
    </source>
</evidence>
<evidence type="ECO:0007829" key="4">
    <source>
        <dbReference type="PDB" id="5O6M"/>
    </source>
</evidence>
<organism>
    <name type="scientific">Meiothermus ruber (strain ATCC 35948 / DSM 1279 / VKM B-1258 / 21)</name>
    <name type="common">Thermus ruber</name>
    <dbReference type="NCBI Taxonomy" id="504728"/>
    <lineage>
        <taxon>Bacteria</taxon>
        <taxon>Thermotogati</taxon>
        <taxon>Deinococcota</taxon>
        <taxon>Deinococci</taxon>
        <taxon>Thermales</taxon>
        <taxon>Thermaceae</taxon>
        <taxon>Meiothermus</taxon>
    </lineage>
</organism>
<proteinExistence type="evidence at protein level"/>
<protein>
    <recommendedName>
        <fullName evidence="2">AMP/ADP-polyphosphate phosphotransferase</fullName>
        <ecNumber evidence="1">2.7.4.-</ecNumber>
    </recommendedName>
</protein>
<reference key="1">
    <citation type="submission" date="2013-04" db="EMBL/GenBank/DDBJ databases">
        <authorList>
            <person name="Chin J."/>
            <person name="Alexander D.H."/>
            <person name="Marks P."/>
            <person name="Korlach J."/>
            <person name="Clum A."/>
            <person name="Copeland A."/>
        </authorList>
    </citation>
    <scope>NUCLEOTIDE SEQUENCE [LARGE SCALE GENOMIC DNA]</scope>
    <source>
        <strain>ATCC 35948 / DSM 1279 / VKM B-1258 / 21</strain>
    </source>
</reference>
<reference key="2">
    <citation type="journal article" date="2014" name="Appl. Environ. Microbiol.">
        <title>A new subfamily of polyphosphate kinase 2 (class III PPK2) catalyzes both nucleoside monophosphate phosphorylation and nucleoside diphosphate phosphorylation.</title>
        <authorList>
            <person name="Motomura K."/>
            <person name="Hirota R."/>
            <person name="Okada M."/>
            <person name="Ikeda T."/>
            <person name="Ishida T."/>
            <person name="Kuroda A."/>
        </authorList>
    </citation>
    <scope>PROTEIN SEQUENCE OF 1-10</scope>
    <scope>FUNCTION</scope>
    <scope>CATALYTIC ACTIVITY</scope>
    <scope>COFACTOR</scope>
    <scope>BIOPHYSICOCHEMICAL PROPERTIES</scope>
    <scope>MUTAGENESIS OF GLU-126</scope>
    <source>
        <strain>ATCC 35948 / DSM 1279 / VKM B-1258 / 21</strain>
    </source>
</reference>